<evidence type="ECO:0000250" key="1"/>
<evidence type="ECO:0000255" key="2">
    <source>
        <dbReference type="PROSITE-ProRule" id="PRU00449"/>
    </source>
</evidence>
<evidence type="ECO:0000255" key="3">
    <source>
        <dbReference type="PROSITE-ProRule" id="PRU00451"/>
    </source>
</evidence>
<gene>
    <name type="primary">SAP5</name>
    <name type="ordered locus">At3g12630</name>
    <name type="ORF">T2E22.105</name>
    <name type="ORF">T2E22.6</name>
</gene>
<proteinExistence type="evidence at transcript level"/>
<name>SAP5_ARATH</name>
<comment type="function">
    <text evidence="1">May be involved in environmental stress response.</text>
</comment>
<sequence length="160" mass="17669">MAQRTEKEETEFKVLETLTTTTTTLCTNNCGVTANPATNNMCQKCFNASLVSAAAGVVESGSILKRSARSVNLRSSPAKVVIRPREIDAVKKRDQQIVNRCSGCRKKVGLTGFRCRCGELFCSEHRYSDRHDCSYDYKTAGREAIARENPVVKAAKMVKV</sequence>
<dbReference type="EMBL" id="AC069474">
    <property type="protein sequence ID" value="AAG51008.1"/>
    <property type="molecule type" value="Genomic_DNA"/>
</dbReference>
<dbReference type="EMBL" id="AP002044">
    <property type="protein sequence ID" value="BAB02254.1"/>
    <property type="molecule type" value="Genomic_DNA"/>
</dbReference>
<dbReference type="EMBL" id="CP002686">
    <property type="protein sequence ID" value="AEE75226.1"/>
    <property type="molecule type" value="Genomic_DNA"/>
</dbReference>
<dbReference type="EMBL" id="BT009714">
    <property type="protein sequence ID" value="AAP88348.1"/>
    <property type="molecule type" value="mRNA"/>
</dbReference>
<dbReference type="EMBL" id="AK228330">
    <property type="protein sequence ID" value="BAF00270.1"/>
    <property type="molecule type" value="mRNA"/>
</dbReference>
<dbReference type="EMBL" id="AY084755">
    <property type="protein sequence ID" value="AAM61324.1"/>
    <property type="molecule type" value="mRNA"/>
</dbReference>
<dbReference type="RefSeq" id="NP_566429.1">
    <property type="nucleotide sequence ID" value="NM_112098.2"/>
</dbReference>
<dbReference type="SMR" id="Q9LHJ8"/>
<dbReference type="BioGRID" id="5777">
    <property type="interactions" value="4"/>
</dbReference>
<dbReference type="FunCoup" id="Q9LHJ8">
    <property type="interactions" value="97"/>
</dbReference>
<dbReference type="IntAct" id="Q9LHJ8">
    <property type="interactions" value="1"/>
</dbReference>
<dbReference type="STRING" id="3702.Q9LHJ8"/>
<dbReference type="PaxDb" id="3702-AT3G12630.1"/>
<dbReference type="ProteomicsDB" id="232760"/>
<dbReference type="EnsemblPlants" id="AT3G12630.1">
    <property type="protein sequence ID" value="AT3G12630.1"/>
    <property type="gene ID" value="AT3G12630"/>
</dbReference>
<dbReference type="GeneID" id="820443"/>
<dbReference type="Gramene" id="AT3G12630.1">
    <property type="protein sequence ID" value="AT3G12630.1"/>
    <property type="gene ID" value="AT3G12630"/>
</dbReference>
<dbReference type="KEGG" id="ath:AT3G12630"/>
<dbReference type="Araport" id="AT3G12630"/>
<dbReference type="TAIR" id="AT3G12630">
    <property type="gene designation" value="SAP5"/>
</dbReference>
<dbReference type="eggNOG" id="KOG3173">
    <property type="taxonomic scope" value="Eukaryota"/>
</dbReference>
<dbReference type="HOGENOM" id="CLU_057016_5_3_1"/>
<dbReference type="InParanoid" id="Q9LHJ8"/>
<dbReference type="OMA" id="CTNNCGV"/>
<dbReference type="OrthoDB" id="428577at2759"/>
<dbReference type="PhylomeDB" id="Q9LHJ8"/>
<dbReference type="PRO" id="PR:Q9LHJ8"/>
<dbReference type="Proteomes" id="UP000006548">
    <property type="component" value="Chromosome 3"/>
</dbReference>
<dbReference type="ExpressionAtlas" id="Q9LHJ8">
    <property type="expression patterns" value="baseline and differential"/>
</dbReference>
<dbReference type="GO" id="GO:0005634">
    <property type="term" value="C:nucleus"/>
    <property type="evidence" value="ECO:0000314"/>
    <property type="project" value="TAIR"/>
</dbReference>
<dbReference type="GO" id="GO:0003677">
    <property type="term" value="F:DNA binding"/>
    <property type="evidence" value="ECO:0007669"/>
    <property type="project" value="InterPro"/>
</dbReference>
<dbReference type="GO" id="GO:0004842">
    <property type="term" value="F:ubiquitin-protein transferase activity"/>
    <property type="evidence" value="ECO:0000314"/>
    <property type="project" value="TAIR"/>
</dbReference>
<dbReference type="GO" id="GO:0008270">
    <property type="term" value="F:zinc ion binding"/>
    <property type="evidence" value="ECO:0007669"/>
    <property type="project" value="UniProtKB-KW"/>
</dbReference>
<dbReference type="GO" id="GO:0051865">
    <property type="term" value="P:protein autoubiquitination"/>
    <property type="evidence" value="ECO:0000314"/>
    <property type="project" value="TAIR"/>
</dbReference>
<dbReference type="GO" id="GO:0016567">
    <property type="term" value="P:protein ubiquitination"/>
    <property type="evidence" value="ECO:0000314"/>
    <property type="project" value="TAIR"/>
</dbReference>
<dbReference type="GO" id="GO:0006970">
    <property type="term" value="P:response to osmotic stress"/>
    <property type="evidence" value="ECO:0000315"/>
    <property type="project" value="CACAO"/>
</dbReference>
<dbReference type="GO" id="GO:0009414">
    <property type="term" value="P:response to water deprivation"/>
    <property type="evidence" value="ECO:0000315"/>
    <property type="project" value="TAIR"/>
</dbReference>
<dbReference type="FunFam" id="1.20.5.4770:FF:000013">
    <property type="entry name" value="Zinc finger A20 and AN1 domain-containing stress-associated protein 5"/>
    <property type="match status" value="1"/>
</dbReference>
<dbReference type="FunFam" id="4.10.1110.10:FF:000001">
    <property type="entry name" value="Zinc finger AN1-type containing 6"/>
    <property type="match status" value="1"/>
</dbReference>
<dbReference type="Gene3D" id="1.20.5.4770">
    <property type="match status" value="1"/>
</dbReference>
<dbReference type="Gene3D" id="4.10.1110.10">
    <property type="entry name" value="AN1-like Zinc finger"/>
    <property type="match status" value="1"/>
</dbReference>
<dbReference type="InterPro" id="IPR035896">
    <property type="entry name" value="AN1-like_Znf"/>
</dbReference>
<dbReference type="InterPro" id="IPR050652">
    <property type="entry name" value="AN1_A20_ZnFinger"/>
</dbReference>
<dbReference type="InterPro" id="IPR002653">
    <property type="entry name" value="Znf_A20"/>
</dbReference>
<dbReference type="InterPro" id="IPR000058">
    <property type="entry name" value="Znf_AN1"/>
</dbReference>
<dbReference type="PANTHER" id="PTHR10634">
    <property type="entry name" value="AN1-TYPE ZINC FINGER PROTEIN"/>
    <property type="match status" value="1"/>
</dbReference>
<dbReference type="PANTHER" id="PTHR10634:SF22">
    <property type="entry name" value="ZINC FINGER A20 AND AN1 DOMAIN-CONTAINING STRESS-ASSOCIATED PROTEIN 5"/>
    <property type="match status" value="1"/>
</dbReference>
<dbReference type="Pfam" id="PF01754">
    <property type="entry name" value="zf-A20"/>
    <property type="match status" value="1"/>
</dbReference>
<dbReference type="Pfam" id="PF01428">
    <property type="entry name" value="zf-AN1"/>
    <property type="match status" value="1"/>
</dbReference>
<dbReference type="SMART" id="SM00259">
    <property type="entry name" value="ZnF_A20"/>
    <property type="match status" value="1"/>
</dbReference>
<dbReference type="SMART" id="SM00154">
    <property type="entry name" value="ZnF_AN1"/>
    <property type="match status" value="1"/>
</dbReference>
<dbReference type="SUPFAM" id="SSF118310">
    <property type="entry name" value="AN1-like Zinc finger"/>
    <property type="match status" value="1"/>
</dbReference>
<dbReference type="SUPFAM" id="SSF57716">
    <property type="entry name" value="Glucocorticoid receptor-like (DNA-binding domain)"/>
    <property type="match status" value="1"/>
</dbReference>
<dbReference type="PROSITE" id="PS51036">
    <property type="entry name" value="ZF_A20"/>
    <property type="match status" value="1"/>
</dbReference>
<dbReference type="PROSITE" id="PS51039">
    <property type="entry name" value="ZF_AN1"/>
    <property type="match status" value="1"/>
</dbReference>
<accession>Q9LHJ8</accession>
<reference key="1">
    <citation type="journal article" date="2000" name="Nature">
        <title>Sequence and analysis of chromosome 3 of the plant Arabidopsis thaliana.</title>
        <authorList>
            <person name="Salanoubat M."/>
            <person name="Lemcke K."/>
            <person name="Rieger M."/>
            <person name="Ansorge W."/>
            <person name="Unseld M."/>
            <person name="Fartmann B."/>
            <person name="Valle G."/>
            <person name="Bloecker H."/>
            <person name="Perez-Alonso M."/>
            <person name="Obermaier B."/>
            <person name="Delseny M."/>
            <person name="Boutry M."/>
            <person name="Grivell L.A."/>
            <person name="Mache R."/>
            <person name="Puigdomenech P."/>
            <person name="De Simone V."/>
            <person name="Choisne N."/>
            <person name="Artiguenave F."/>
            <person name="Robert C."/>
            <person name="Brottier P."/>
            <person name="Wincker P."/>
            <person name="Cattolico L."/>
            <person name="Weissenbach J."/>
            <person name="Saurin W."/>
            <person name="Quetier F."/>
            <person name="Schaefer M."/>
            <person name="Mueller-Auer S."/>
            <person name="Gabel C."/>
            <person name="Fuchs M."/>
            <person name="Benes V."/>
            <person name="Wurmbach E."/>
            <person name="Drzonek H."/>
            <person name="Erfle H."/>
            <person name="Jordan N."/>
            <person name="Bangert S."/>
            <person name="Wiedelmann R."/>
            <person name="Kranz H."/>
            <person name="Voss H."/>
            <person name="Holland R."/>
            <person name="Brandt P."/>
            <person name="Nyakatura G."/>
            <person name="Vezzi A."/>
            <person name="D'Angelo M."/>
            <person name="Pallavicini A."/>
            <person name="Toppo S."/>
            <person name="Simionati B."/>
            <person name="Conrad A."/>
            <person name="Hornischer K."/>
            <person name="Kauer G."/>
            <person name="Loehnert T.-H."/>
            <person name="Nordsiek G."/>
            <person name="Reichelt J."/>
            <person name="Scharfe M."/>
            <person name="Schoen O."/>
            <person name="Bargues M."/>
            <person name="Terol J."/>
            <person name="Climent J."/>
            <person name="Navarro P."/>
            <person name="Collado C."/>
            <person name="Perez-Perez A."/>
            <person name="Ottenwaelder B."/>
            <person name="Duchemin D."/>
            <person name="Cooke R."/>
            <person name="Laudie M."/>
            <person name="Berger-Llauro C."/>
            <person name="Purnelle B."/>
            <person name="Masuy D."/>
            <person name="de Haan M."/>
            <person name="Maarse A.C."/>
            <person name="Alcaraz J.-P."/>
            <person name="Cottet A."/>
            <person name="Casacuberta E."/>
            <person name="Monfort A."/>
            <person name="Argiriou A."/>
            <person name="Flores M."/>
            <person name="Liguori R."/>
            <person name="Vitale D."/>
            <person name="Mannhaupt G."/>
            <person name="Haase D."/>
            <person name="Schoof H."/>
            <person name="Rudd S."/>
            <person name="Zaccaria P."/>
            <person name="Mewes H.-W."/>
            <person name="Mayer K.F.X."/>
            <person name="Kaul S."/>
            <person name="Town C.D."/>
            <person name="Koo H.L."/>
            <person name="Tallon L.J."/>
            <person name="Jenkins J."/>
            <person name="Rooney T."/>
            <person name="Rizzo M."/>
            <person name="Walts A."/>
            <person name="Utterback T."/>
            <person name="Fujii C.Y."/>
            <person name="Shea T.P."/>
            <person name="Creasy T.H."/>
            <person name="Haas B."/>
            <person name="Maiti R."/>
            <person name="Wu D."/>
            <person name="Peterson J."/>
            <person name="Van Aken S."/>
            <person name="Pai G."/>
            <person name="Militscher J."/>
            <person name="Sellers P."/>
            <person name="Gill J.E."/>
            <person name="Feldblyum T.V."/>
            <person name="Preuss D."/>
            <person name="Lin X."/>
            <person name="Nierman W.C."/>
            <person name="Salzberg S.L."/>
            <person name="White O."/>
            <person name="Venter J.C."/>
            <person name="Fraser C.M."/>
            <person name="Kaneko T."/>
            <person name="Nakamura Y."/>
            <person name="Sato S."/>
            <person name="Kato T."/>
            <person name="Asamizu E."/>
            <person name="Sasamoto S."/>
            <person name="Kimura T."/>
            <person name="Idesawa K."/>
            <person name="Kawashima K."/>
            <person name="Kishida Y."/>
            <person name="Kiyokawa C."/>
            <person name="Kohara M."/>
            <person name="Matsumoto M."/>
            <person name="Matsuno A."/>
            <person name="Muraki A."/>
            <person name="Nakayama S."/>
            <person name="Nakazaki N."/>
            <person name="Shinpo S."/>
            <person name="Takeuchi C."/>
            <person name="Wada T."/>
            <person name="Watanabe A."/>
            <person name="Yamada M."/>
            <person name="Yasuda M."/>
            <person name="Tabata S."/>
        </authorList>
    </citation>
    <scope>NUCLEOTIDE SEQUENCE [LARGE SCALE GENOMIC DNA]</scope>
    <source>
        <strain>cv. Columbia</strain>
    </source>
</reference>
<reference key="2">
    <citation type="journal article" date="2000" name="DNA Res.">
        <title>Structural analysis of Arabidopsis thaliana chromosome 3. II. Sequence features of the 4,251,695 bp regions covered by 90 P1, TAC and BAC clones.</title>
        <authorList>
            <person name="Kaneko T."/>
            <person name="Katoh T."/>
            <person name="Sato S."/>
            <person name="Nakamura Y."/>
            <person name="Asamizu E."/>
            <person name="Tabata S."/>
        </authorList>
    </citation>
    <scope>NUCLEOTIDE SEQUENCE [LARGE SCALE GENOMIC DNA]</scope>
    <source>
        <strain>cv. Columbia</strain>
    </source>
</reference>
<reference key="3">
    <citation type="journal article" date="2017" name="Plant J.">
        <title>Araport11: a complete reannotation of the Arabidopsis thaliana reference genome.</title>
        <authorList>
            <person name="Cheng C.Y."/>
            <person name="Krishnakumar V."/>
            <person name="Chan A.P."/>
            <person name="Thibaud-Nissen F."/>
            <person name="Schobel S."/>
            <person name="Town C.D."/>
        </authorList>
    </citation>
    <scope>GENOME REANNOTATION</scope>
    <source>
        <strain>cv. Columbia</strain>
    </source>
</reference>
<reference key="4">
    <citation type="journal article" date="2003" name="Science">
        <title>Empirical analysis of transcriptional activity in the Arabidopsis genome.</title>
        <authorList>
            <person name="Yamada K."/>
            <person name="Lim J."/>
            <person name="Dale J.M."/>
            <person name="Chen H."/>
            <person name="Shinn P."/>
            <person name="Palm C.J."/>
            <person name="Southwick A.M."/>
            <person name="Wu H.C."/>
            <person name="Kim C.J."/>
            <person name="Nguyen M."/>
            <person name="Pham P.K."/>
            <person name="Cheuk R.F."/>
            <person name="Karlin-Newmann G."/>
            <person name="Liu S.X."/>
            <person name="Lam B."/>
            <person name="Sakano H."/>
            <person name="Wu T."/>
            <person name="Yu G."/>
            <person name="Miranda M."/>
            <person name="Quach H.L."/>
            <person name="Tripp M."/>
            <person name="Chang C.H."/>
            <person name="Lee J.M."/>
            <person name="Toriumi M.J."/>
            <person name="Chan M.M."/>
            <person name="Tang C.C."/>
            <person name="Onodera C.S."/>
            <person name="Deng J.M."/>
            <person name="Akiyama K."/>
            <person name="Ansari Y."/>
            <person name="Arakawa T."/>
            <person name="Banh J."/>
            <person name="Banno F."/>
            <person name="Bowser L."/>
            <person name="Brooks S.Y."/>
            <person name="Carninci P."/>
            <person name="Chao Q."/>
            <person name="Choy N."/>
            <person name="Enju A."/>
            <person name="Goldsmith A.D."/>
            <person name="Gurjal M."/>
            <person name="Hansen N.F."/>
            <person name="Hayashizaki Y."/>
            <person name="Johnson-Hopson C."/>
            <person name="Hsuan V.W."/>
            <person name="Iida K."/>
            <person name="Karnes M."/>
            <person name="Khan S."/>
            <person name="Koesema E."/>
            <person name="Ishida J."/>
            <person name="Jiang P.X."/>
            <person name="Jones T."/>
            <person name="Kawai J."/>
            <person name="Kamiya A."/>
            <person name="Meyers C."/>
            <person name="Nakajima M."/>
            <person name="Narusaka M."/>
            <person name="Seki M."/>
            <person name="Sakurai T."/>
            <person name="Satou M."/>
            <person name="Tamse R."/>
            <person name="Vaysberg M."/>
            <person name="Wallender E.K."/>
            <person name="Wong C."/>
            <person name="Yamamura Y."/>
            <person name="Yuan S."/>
            <person name="Shinozaki K."/>
            <person name="Davis R.W."/>
            <person name="Theologis A."/>
            <person name="Ecker J.R."/>
        </authorList>
    </citation>
    <scope>NUCLEOTIDE SEQUENCE [LARGE SCALE MRNA]</scope>
    <source>
        <strain>cv. Columbia</strain>
    </source>
</reference>
<reference key="5">
    <citation type="submission" date="2006-07" db="EMBL/GenBank/DDBJ databases">
        <title>Large-scale analysis of RIKEN Arabidopsis full-length (RAFL) cDNAs.</title>
        <authorList>
            <person name="Totoki Y."/>
            <person name="Seki M."/>
            <person name="Ishida J."/>
            <person name="Nakajima M."/>
            <person name="Enju A."/>
            <person name="Kamiya A."/>
            <person name="Narusaka M."/>
            <person name="Shin-i T."/>
            <person name="Nakagawa M."/>
            <person name="Sakamoto N."/>
            <person name="Oishi K."/>
            <person name="Kohara Y."/>
            <person name="Kobayashi M."/>
            <person name="Toyoda A."/>
            <person name="Sakaki Y."/>
            <person name="Sakurai T."/>
            <person name="Iida K."/>
            <person name="Akiyama K."/>
            <person name="Satou M."/>
            <person name="Toyoda T."/>
            <person name="Konagaya A."/>
            <person name="Carninci P."/>
            <person name="Kawai J."/>
            <person name="Hayashizaki Y."/>
            <person name="Shinozaki K."/>
        </authorList>
    </citation>
    <scope>NUCLEOTIDE SEQUENCE [LARGE SCALE MRNA]</scope>
    <source>
        <strain>cv. Columbia</strain>
    </source>
</reference>
<reference key="6">
    <citation type="submission" date="2002-03" db="EMBL/GenBank/DDBJ databases">
        <title>Full-length cDNA from Arabidopsis thaliana.</title>
        <authorList>
            <person name="Brover V.V."/>
            <person name="Troukhan M.E."/>
            <person name="Alexandrov N.A."/>
            <person name="Lu Y.-P."/>
            <person name="Flavell R.B."/>
            <person name="Feldmann K.A."/>
        </authorList>
    </citation>
    <scope>NUCLEOTIDE SEQUENCE [LARGE SCALE MRNA]</scope>
</reference>
<reference key="7">
    <citation type="journal article" date="2006" name="Mol. Genet. Genomics">
        <title>Genome-wide analysis of the stress associated protein (SAP) gene family containing A20/AN1 zinc-finger(s) in rice and their phylogenetic relationship with Arabidopsis.</title>
        <authorList>
            <person name="Vij S."/>
            <person name="Tyagi A.K."/>
        </authorList>
    </citation>
    <scope>GENE FAMILY</scope>
</reference>
<feature type="chain" id="PRO_0000269857" description="Zinc finger A20 and AN1 domain-containing stress-associated protein 5">
    <location>
        <begin position="1"/>
        <end position="160"/>
    </location>
</feature>
<feature type="zinc finger region" description="A20-type" evidence="3">
    <location>
        <begin position="20"/>
        <end position="54"/>
    </location>
</feature>
<feature type="zinc finger region" description="AN1-type" evidence="2">
    <location>
        <begin position="95"/>
        <end position="141"/>
    </location>
</feature>
<feature type="binding site" evidence="3">
    <location>
        <position position="26"/>
    </location>
    <ligand>
        <name>Zn(2+)</name>
        <dbReference type="ChEBI" id="CHEBI:29105"/>
        <label>1</label>
    </ligand>
</feature>
<feature type="binding site" evidence="3">
    <location>
        <position position="30"/>
    </location>
    <ligand>
        <name>Zn(2+)</name>
        <dbReference type="ChEBI" id="CHEBI:29105"/>
        <label>1</label>
    </ligand>
</feature>
<feature type="binding site" evidence="3">
    <location>
        <position position="42"/>
    </location>
    <ligand>
        <name>Zn(2+)</name>
        <dbReference type="ChEBI" id="CHEBI:29105"/>
        <label>1</label>
    </ligand>
</feature>
<feature type="binding site" evidence="3">
    <location>
        <position position="45"/>
    </location>
    <ligand>
        <name>Zn(2+)</name>
        <dbReference type="ChEBI" id="CHEBI:29105"/>
        <label>1</label>
    </ligand>
</feature>
<feature type="binding site" evidence="2">
    <location>
        <position position="101"/>
    </location>
    <ligand>
        <name>Zn(2+)</name>
        <dbReference type="ChEBI" id="CHEBI:29105"/>
        <label>2</label>
    </ligand>
</feature>
<feature type="binding site" evidence="2">
    <location>
        <position position="104"/>
    </location>
    <ligand>
        <name>Zn(2+)</name>
        <dbReference type="ChEBI" id="CHEBI:29105"/>
        <label>2</label>
    </ligand>
</feature>
<feature type="binding site" evidence="2">
    <location>
        <position position="115"/>
    </location>
    <ligand>
        <name>Zn(2+)</name>
        <dbReference type="ChEBI" id="CHEBI:29105"/>
        <label>3</label>
    </ligand>
</feature>
<feature type="binding site" evidence="2">
    <location>
        <position position="117"/>
    </location>
    <ligand>
        <name>Zn(2+)</name>
        <dbReference type="ChEBI" id="CHEBI:29105"/>
        <label>3</label>
    </ligand>
</feature>
<feature type="binding site" evidence="2">
    <location>
        <position position="122"/>
    </location>
    <ligand>
        <name>Zn(2+)</name>
        <dbReference type="ChEBI" id="CHEBI:29105"/>
        <label>2</label>
    </ligand>
</feature>
<feature type="binding site" evidence="2">
    <location>
        <position position="125"/>
    </location>
    <ligand>
        <name>Zn(2+)</name>
        <dbReference type="ChEBI" id="CHEBI:29105"/>
        <label>2</label>
    </ligand>
</feature>
<feature type="binding site" evidence="2">
    <location>
        <position position="131"/>
    </location>
    <ligand>
        <name>Zn(2+)</name>
        <dbReference type="ChEBI" id="CHEBI:29105"/>
        <label>3</label>
    </ligand>
</feature>
<feature type="binding site" evidence="2">
    <location>
        <position position="133"/>
    </location>
    <ligand>
        <name>Zn(2+)</name>
        <dbReference type="ChEBI" id="CHEBI:29105"/>
        <label>3</label>
    </ligand>
</feature>
<keyword id="KW-0479">Metal-binding</keyword>
<keyword id="KW-1185">Reference proteome</keyword>
<keyword id="KW-0862">Zinc</keyword>
<keyword id="KW-0863">Zinc-finger</keyword>
<protein>
    <recommendedName>
        <fullName>Zinc finger A20 and AN1 domain-containing stress-associated protein 5</fullName>
        <shortName>AtSAP5</shortName>
    </recommendedName>
</protein>
<organism>
    <name type="scientific">Arabidopsis thaliana</name>
    <name type="common">Mouse-ear cress</name>
    <dbReference type="NCBI Taxonomy" id="3702"/>
    <lineage>
        <taxon>Eukaryota</taxon>
        <taxon>Viridiplantae</taxon>
        <taxon>Streptophyta</taxon>
        <taxon>Embryophyta</taxon>
        <taxon>Tracheophyta</taxon>
        <taxon>Spermatophyta</taxon>
        <taxon>Magnoliopsida</taxon>
        <taxon>eudicotyledons</taxon>
        <taxon>Gunneridae</taxon>
        <taxon>Pentapetalae</taxon>
        <taxon>rosids</taxon>
        <taxon>malvids</taxon>
        <taxon>Brassicales</taxon>
        <taxon>Brassicaceae</taxon>
        <taxon>Camelineae</taxon>
        <taxon>Arabidopsis</taxon>
    </lineage>
</organism>